<protein>
    <recommendedName>
        <fullName evidence="7">Nuclear cap-binding protein subunit 3</fullName>
    </recommendedName>
    <alternativeName>
        <fullName>Protein ELG</fullName>
    </alternativeName>
</protein>
<feature type="chain" id="PRO_0000308582" description="Nuclear cap-binding protein subunit 3">
    <location>
        <begin position="1"/>
        <end position="620"/>
    </location>
</feature>
<feature type="region of interest" description="Disordered" evidence="1">
    <location>
        <begin position="15"/>
        <end position="42"/>
    </location>
</feature>
<feature type="region of interest" description="RNA recognition motif (RRM) domain" evidence="4">
    <location>
        <begin position="126"/>
        <end position="187"/>
    </location>
</feature>
<feature type="region of interest" description="Disordered" evidence="1">
    <location>
        <begin position="185"/>
        <end position="233"/>
    </location>
</feature>
<feature type="region of interest" description="Disordered" evidence="1">
    <location>
        <begin position="332"/>
        <end position="419"/>
    </location>
</feature>
<feature type="region of interest" description="Disordered" evidence="1">
    <location>
        <begin position="436"/>
        <end position="620"/>
    </location>
</feature>
<feature type="short sequence motif" description="WLDD motif; essential for 7-methylguanosine-containing mRNA cap binding" evidence="2">
    <location>
        <begin position="155"/>
        <end position="158"/>
    </location>
</feature>
<feature type="compositionally biased region" description="Low complexity" evidence="1">
    <location>
        <begin position="15"/>
        <end position="28"/>
    </location>
</feature>
<feature type="compositionally biased region" description="Basic and acidic residues" evidence="1">
    <location>
        <begin position="185"/>
        <end position="198"/>
    </location>
</feature>
<feature type="compositionally biased region" description="Acidic residues" evidence="1">
    <location>
        <begin position="209"/>
        <end position="230"/>
    </location>
</feature>
<feature type="compositionally biased region" description="Acidic residues" evidence="1">
    <location>
        <begin position="341"/>
        <end position="365"/>
    </location>
</feature>
<feature type="compositionally biased region" description="Basic and acidic residues" evidence="1">
    <location>
        <begin position="366"/>
        <end position="388"/>
    </location>
</feature>
<feature type="compositionally biased region" description="Basic and acidic residues" evidence="1">
    <location>
        <begin position="459"/>
        <end position="474"/>
    </location>
</feature>
<feature type="compositionally biased region" description="Basic and acidic residues" evidence="1">
    <location>
        <begin position="511"/>
        <end position="521"/>
    </location>
</feature>
<feature type="compositionally biased region" description="Basic and acidic residues" evidence="1">
    <location>
        <begin position="554"/>
        <end position="569"/>
    </location>
</feature>
<feature type="compositionally biased region" description="Basic and acidic residues" evidence="1">
    <location>
        <begin position="585"/>
        <end position="598"/>
    </location>
</feature>
<feature type="compositionally biased region" description="Low complexity" evidence="1">
    <location>
        <begin position="611"/>
        <end position="620"/>
    </location>
</feature>
<feature type="modified residue" description="Phosphoserine" evidence="9 10 11 12 13 14">
    <location>
        <position position="25"/>
    </location>
</feature>
<feature type="modified residue" description="Phosphoserine" evidence="13">
    <location>
        <position position="73"/>
    </location>
</feature>
<feature type="modified residue" description="Phosphoserine" evidence="10 11 12">
    <location>
        <position position="209"/>
    </location>
</feature>
<feature type="modified residue" description="Phosphoserine" evidence="10 11 12">
    <location>
        <position position="210"/>
    </location>
</feature>
<feature type="modified residue" description="Phosphothreonine" evidence="10">
    <location>
        <position position="413"/>
    </location>
</feature>
<feature type="modified residue" description="Phosphoserine" evidence="10 13">
    <location>
        <position position="415"/>
    </location>
</feature>
<feature type="modified residue" description="Phosphoserine" evidence="8">
    <location>
        <position position="620"/>
    </location>
</feature>
<feature type="cross-link" description="Glycyl lysine isopeptide (Lys-Gly) (interchain with G-Cter in SUMO2)" evidence="15 16">
    <location>
        <position position="12"/>
    </location>
</feature>
<feature type="cross-link" description="Glycyl lysine isopeptide (Lys-Gly) (interchain with G-Cter in SUMO2)" evidence="16">
    <location>
        <position position="70"/>
    </location>
</feature>
<feature type="cross-link" description="Glycyl lysine isopeptide (Lys-Gly) (interchain with G-Cter in SUMO2)" evidence="16">
    <location>
        <position position="186"/>
    </location>
</feature>
<feature type="cross-link" description="Glycyl lysine isopeptide (Lys-Gly) (interchain with G-Cter in SUMO2)" evidence="16">
    <location>
        <position position="541"/>
    </location>
</feature>
<feature type="splice variant" id="VSP_028999" description="In isoform 2." evidence="3 5">
    <location>
        <begin position="1"/>
        <end position="280"/>
    </location>
</feature>
<feature type="mutagenesis site" description="Minor loss of 7-methylguanosine-containing mRNA cap binding." evidence="2">
    <original>D</original>
    <variation>A</variation>
    <location>
        <position position="134"/>
    </location>
</feature>
<feature type="mutagenesis site" description="Complete loss of 7-methylguanosine-containing mRNA cap binding." evidence="2">
    <original>WLDD</original>
    <variation>ALAA</variation>
    <location>
        <begin position="155"/>
        <end position="158"/>
    </location>
</feature>
<feature type="sequence conflict" description="In Ref. 5; BAD97190." evidence="6" ref="5">
    <original>D</original>
    <variation>N</variation>
    <location>
        <position position="465"/>
    </location>
</feature>
<feature type="helix" evidence="17">
    <location>
        <begin position="575"/>
        <end position="593"/>
    </location>
</feature>
<dbReference type="EMBL" id="AJ277841">
    <property type="protein sequence ID" value="CAB91001.1"/>
    <property type="molecule type" value="mRNA"/>
</dbReference>
<dbReference type="EMBL" id="AC005940">
    <property type="status" value="NOT_ANNOTATED_CDS"/>
    <property type="molecule type" value="Genomic_DNA"/>
</dbReference>
<dbReference type="EMBL" id="AC116914">
    <property type="status" value="NOT_ANNOTATED_CDS"/>
    <property type="molecule type" value="Genomic_DNA"/>
</dbReference>
<dbReference type="EMBL" id="AK125048">
    <property type="protein sequence ID" value="BAG54129.1"/>
    <property type="molecule type" value="mRNA"/>
</dbReference>
<dbReference type="EMBL" id="AK223470">
    <property type="protein sequence ID" value="BAD97190.1"/>
    <property type="status" value="ALT_INIT"/>
    <property type="molecule type" value="mRNA"/>
</dbReference>
<dbReference type="EMBL" id="CH471108">
    <property type="protein sequence ID" value="EAW90479.1"/>
    <property type="molecule type" value="Genomic_DNA"/>
</dbReference>
<dbReference type="EMBL" id="BC010707">
    <property type="protein sequence ID" value="AAH10707.1"/>
    <property type="molecule type" value="mRNA"/>
</dbReference>
<dbReference type="CCDS" id="CCDS45578.1">
    <molecule id="Q53F19-1"/>
</dbReference>
<dbReference type="RefSeq" id="NP_001107590.1">
    <molecule id="Q53F19-1"/>
    <property type="nucleotide sequence ID" value="NM_001114118.3"/>
</dbReference>
<dbReference type="RefSeq" id="XP_016880318.1">
    <property type="nucleotide sequence ID" value="XM_017024829.1"/>
</dbReference>
<dbReference type="PDB" id="8BY6">
    <property type="method" value="EM"/>
    <property type="resolution" value="3.19 A"/>
    <property type="chains" value="C=561-620"/>
</dbReference>
<dbReference type="PDBsum" id="8BY6"/>
<dbReference type="EMDB" id="EMD-16321"/>
<dbReference type="SMR" id="Q53F19"/>
<dbReference type="BioGRID" id="120662">
    <property type="interactions" value="210"/>
</dbReference>
<dbReference type="ComplexPortal" id="CPX-2488">
    <property type="entry name" value="TREX transcription-export complex, DX39B variant"/>
</dbReference>
<dbReference type="ComplexPortal" id="CPX-3624">
    <property type="entry name" value="Alternative nuclear cap-binding complex"/>
</dbReference>
<dbReference type="ComplexPortal" id="CPX-7261">
    <property type="entry name" value="TREX transcription-export complex, DX39A variant"/>
</dbReference>
<dbReference type="CORUM" id="Q53F19"/>
<dbReference type="FunCoup" id="Q53F19">
    <property type="interactions" value="3074"/>
</dbReference>
<dbReference type="IntAct" id="Q53F19">
    <property type="interactions" value="334"/>
</dbReference>
<dbReference type="MINT" id="Q53F19"/>
<dbReference type="STRING" id="9606.ENSP00000373657"/>
<dbReference type="iPTMnet" id="Q53F19"/>
<dbReference type="PhosphoSitePlus" id="Q53F19"/>
<dbReference type="SwissPalm" id="Q53F19"/>
<dbReference type="BioMuta" id="NCBP3"/>
<dbReference type="DMDM" id="160017360"/>
<dbReference type="jPOST" id="Q53F19"/>
<dbReference type="MassIVE" id="Q53F19"/>
<dbReference type="PaxDb" id="9606-ENSP00000373657"/>
<dbReference type="PeptideAtlas" id="Q53F19"/>
<dbReference type="ProteomicsDB" id="62454">
    <molecule id="Q53F19-1"/>
</dbReference>
<dbReference type="ProteomicsDB" id="62455">
    <molecule id="Q53F19-2"/>
</dbReference>
<dbReference type="Pumba" id="Q53F19"/>
<dbReference type="Antibodypedia" id="64617">
    <property type="antibodies" value="44 antibodies from 13 providers"/>
</dbReference>
<dbReference type="DNASU" id="55421"/>
<dbReference type="Ensembl" id="ENST00000389005.6">
    <molecule id="Q53F19-1"/>
    <property type="protein sequence ID" value="ENSP00000373657.4"/>
    <property type="gene ID" value="ENSG00000074356.17"/>
</dbReference>
<dbReference type="GeneID" id="55421"/>
<dbReference type="KEGG" id="hsa:55421"/>
<dbReference type="MANE-Select" id="ENST00000389005.6">
    <property type="protein sequence ID" value="ENSP00000373657.4"/>
    <property type="RefSeq nucleotide sequence ID" value="NM_001114118.3"/>
    <property type="RefSeq protein sequence ID" value="NP_001107590.1"/>
</dbReference>
<dbReference type="UCSC" id="uc010ckl.3">
    <molecule id="Q53F19-1"/>
    <property type="organism name" value="human"/>
</dbReference>
<dbReference type="AGR" id="HGNC:24612"/>
<dbReference type="CTD" id="55421"/>
<dbReference type="DisGeNET" id="55421"/>
<dbReference type="GeneCards" id="NCBP3"/>
<dbReference type="HGNC" id="HGNC:24612">
    <property type="gene designation" value="NCBP3"/>
</dbReference>
<dbReference type="HPA" id="ENSG00000074356">
    <property type="expression patterns" value="Low tissue specificity"/>
</dbReference>
<dbReference type="MIM" id="616624">
    <property type="type" value="gene"/>
</dbReference>
<dbReference type="neXtProt" id="NX_Q53F19"/>
<dbReference type="OpenTargets" id="ENSG00000074356"/>
<dbReference type="PharmGKB" id="PA145149545"/>
<dbReference type="VEuPathDB" id="HostDB:ENSG00000074356"/>
<dbReference type="eggNOG" id="ENOG502QRX4">
    <property type="taxonomic scope" value="Eukaryota"/>
</dbReference>
<dbReference type="GeneTree" id="ENSGT00390000005712"/>
<dbReference type="HOGENOM" id="CLU_488838_0_0_1"/>
<dbReference type="InParanoid" id="Q53F19"/>
<dbReference type="OMA" id="QYSRPRP"/>
<dbReference type="OrthoDB" id="422106at2759"/>
<dbReference type="PAN-GO" id="Q53F19">
    <property type="GO annotations" value="3 GO annotations based on evolutionary models"/>
</dbReference>
<dbReference type="PhylomeDB" id="Q53F19"/>
<dbReference type="TreeFam" id="TF331339"/>
<dbReference type="PathwayCommons" id="Q53F19"/>
<dbReference type="SignaLink" id="Q53F19"/>
<dbReference type="SIGNOR" id="Q53F19"/>
<dbReference type="BioGRID-ORCS" id="55421">
    <property type="hits" value="37 hits in 1138 CRISPR screens"/>
</dbReference>
<dbReference type="CD-CODE" id="232F8A39">
    <property type="entry name" value="P-body"/>
</dbReference>
<dbReference type="ChiTaRS" id="NCBP3">
    <property type="organism name" value="human"/>
</dbReference>
<dbReference type="GenomeRNAi" id="55421"/>
<dbReference type="Pharos" id="Q53F19">
    <property type="development level" value="Tbio"/>
</dbReference>
<dbReference type="PRO" id="PR:Q53F19"/>
<dbReference type="Proteomes" id="UP000005640">
    <property type="component" value="Chromosome 17"/>
</dbReference>
<dbReference type="RNAct" id="Q53F19">
    <property type="molecule type" value="protein"/>
</dbReference>
<dbReference type="Bgee" id="ENSG00000074356">
    <property type="expression patterns" value="Expressed in right uterine tube and 178 other cell types or tissues"/>
</dbReference>
<dbReference type="ExpressionAtlas" id="Q53F19">
    <property type="expression patterns" value="baseline and differential"/>
</dbReference>
<dbReference type="GO" id="GO:0005737">
    <property type="term" value="C:cytoplasm"/>
    <property type="evidence" value="ECO:0000314"/>
    <property type="project" value="UniProtKB"/>
</dbReference>
<dbReference type="GO" id="GO:0005846">
    <property type="term" value="C:nuclear cap binding complex"/>
    <property type="evidence" value="ECO:0000353"/>
    <property type="project" value="ComplexPortal"/>
</dbReference>
<dbReference type="GO" id="GO:0016607">
    <property type="term" value="C:nuclear speck"/>
    <property type="evidence" value="ECO:0000314"/>
    <property type="project" value="HPA"/>
</dbReference>
<dbReference type="GO" id="GO:0005634">
    <property type="term" value="C:nucleus"/>
    <property type="evidence" value="ECO:0000314"/>
    <property type="project" value="UniProtKB"/>
</dbReference>
<dbReference type="GO" id="GO:0034518">
    <property type="term" value="C:RNA cap binding complex"/>
    <property type="evidence" value="ECO:0000304"/>
    <property type="project" value="UniProtKB"/>
</dbReference>
<dbReference type="GO" id="GO:0003729">
    <property type="term" value="F:mRNA binding"/>
    <property type="evidence" value="ECO:0000314"/>
    <property type="project" value="UniProtKB"/>
</dbReference>
<dbReference type="GO" id="GO:0000340">
    <property type="term" value="F:RNA 7-methylguanosine cap binding"/>
    <property type="evidence" value="ECO:0000315"/>
    <property type="project" value="UniProtKB"/>
</dbReference>
<dbReference type="GO" id="GO:0003723">
    <property type="term" value="F:RNA binding"/>
    <property type="evidence" value="ECO:0007005"/>
    <property type="project" value="UniProtKB"/>
</dbReference>
<dbReference type="GO" id="GO:0000339">
    <property type="term" value="F:RNA cap binding"/>
    <property type="evidence" value="ECO:0000318"/>
    <property type="project" value="GO_Central"/>
</dbReference>
<dbReference type="GO" id="GO:0006370">
    <property type="term" value="P:7-methylguanosine mRNA capping"/>
    <property type="evidence" value="ECO:0007669"/>
    <property type="project" value="UniProtKB-KW"/>
</dbReference>
<dbReference type="GO" id="GO:0051607">
    <property type="term" value="P:defense response to virus"/>
    <property type="evidence" value="ECO:0000315"/>
    <property type="project" value="UniProtKB"/>
</dbReference>
<dbReference type="GO" id="GO:0006406">
    <property type="term" value="P:mRNA export from nucleus"/>
    <property type="evidence" value="ECO:0000315"/>
    <property type="project" value="ComplexPortal"/>
</dbReference>
<dbReference type="GO" id="GO:0042789">
    <property type="term" value="P:mRNA transcription by RNA polymerase II"/>
    <property type="evidence" value="ECO:0000303"/>
    <property type="project" value="ComplexPortal"/>
</dbReference>
<dbReference type="GO" id="GO:0035194">
    <property type="term" value="P:regulatory ncRNA-mediated post-transcriptional gene silencing"/>
    <property type="evidence" value="ECO:0000303"/>
    <property type="project" value="ComplexPortal"/>
</dbReference>
<dbReference type="GO" id="GO:0006408">
    <property type="term" value="P:snRNA export from nucleus"/>
    <property type="evidence" value="ECO:0000315"/>
    <property type="project" value="ComplexPortal"/>
</dbReference>
<dbReference type="FunFam" id="3.30.70.330:FF:000337">
    <property type="entry name" value="nuclear cap-binding protein subunit 3 isoform X1"/>
    <property type="match status" value="1"/>
</dbReference>
<dbReference type="Gene3D" id="3.30.70.330">
    <property type="match status" value="1"/>
</dbReference>
<dbReference type="InterPro" id="IPR019416">
    <property type="entry name" value="NCBP3"/>
</dbReference>
<dbReference type="InterPro" id="IPR012677">
    <property type="entry name" value="Nucleotide-bd_a/b_plait_sf"/>
</dbReference>
<dbReference type="PANTHER" id="PTHR16291">
    <property type="entry name" value="NUCLEAR CAP-BINDING PROTEIN SUBUNIT 3"/>
    <property type="match status" value="1"/>
</dbReference>
<dbReference type="PANTHER" id="PTHR16291:SF0">
    <property type="entry name" value="NUCLEAR CAP-BINDING PROTEIN SUBUNIT 3"/>
    <property type="match status" value="1"/>
</dbReference>
<dbReference type="Pfam" id="PF10309">
    <property type="entry name" value="NCBP3"/>
    <property type="match status" value="1"/>
</dbReference>
<accession>Q53F19</accession>
<accession>B3KWG7</accession>
<accession>Q7L406</accession>
<accession>Q96FK1</accession>
<accession>Q9NXZ4</accession>
<gene>
    <name evidence="7" type="primary">NCBP3</name>
    <name type="synonym">C17orf85</name>
</gene>
<name>NCBP3_HUMAN</name>
<reference key="1">
    <citation type="submission" date="2000-05" db="EMBL/GenBank/DDBJ databases">
        <title>Transcriptional regulation of the alpha E integrin gene.</title>
        <authorList>
            <person name="Robinson P."/>
            <person name="Green S."/>
            <person name="Carter C."/>
            <person name="Coadwell J."/>
            <person name="Kilshaw P."/>
        </authorList>
    </citation>
    <scope>NUCLEOTIDE SEQUENCE [MRNA] (ISOFORM 2)</scope>
</reference>
<reference key="2">
    <citation type="journal article" date="2004" name="Nat. Genet.">
        <title>Complete sequencing and characterization of 21,243 full-length human cDNAs.</title>
        <authorList>
            <person name="Ota T."/>
            <person name="Suzuki Y."/>
            <person name="Nishikawa T."/>
            <person name="Otsuki T."/>
            <person name="Sugiyama T."/>
            <person name="Irie R."/>
            <person name="Wakamatsu A."/>
            <person name="Hayashi K."/>
            <person name="Sato H."/>
            <person name="Nagai K."/>
            <person name="Kimura K."/>
            <person name="Makita H."/>
            <person name="Sekine M."/>
            <person name="Obayashi M."/>
            <person name="Nishi T."/>
            <person name="Shibahara T."/>
            <person name="Tanaka T."/>
            <person name="Ishii S."/>
            <person name="Yamamoto J."/>
            <person name="Saito K."/>
            <person name="Kawai Y."/>
            <person name="Isono Y."/>
            <person name="Nakamura Y."/>
            <person name="Nagahari K."/>
            <person name="Murakami K."/>
            <person name="Yasuda T."/>
            <person name="Iwayanagi T."/>
            <person name="Wagatsuma M."/>
            <person name="Shiratori A."/>
            <person name="Sudo H."/>
            <person name="Hosoiri T."/>
            <person name="Kaku Y."/>
            <person name="Kodaira H."/>
            <person name="Kondo H."/>
            <person name="Sugawara M."/>
            <person name="Takahashi M."/>
            <person name="Kanda K."/>
            <person name="Yokoi T."/>
            <person name="Furuya T."/>
            <person name="Kikkawa E."/>
            <person name="Omura Y."/>
            <person name="Abe K."/>
            <person name="Kamihara K."/>
            <person name="Katsuta N."/>
            <person name="Sato K."/>
            <person name="Tanikawa M."/>
            <person name="Yamazaki M."/>
            <person name="Ninomiya K."/>
            <person name="Ishibashi T."/>
            <person name="Yamashita H."/>
            <person name="Murakawa K."/>
            <person name="Fujimori K."/>
            <person name="Tanai H."/>
            <person name="Kimata M."/>
            <person name="Watanabe M."/>
            <person name="Hiraoka S."/>
            <person name="Chiba Y."/>
            <person name="Ishida S."/>
            <person name="Ono Y."/>
            <person name="Takiguchi S."/>
            <person name="Watanabe S."/>
            <person name="Yosida M."/>
            <person name="Hotuta T."/>
            <person name="Kusano J."/>
            <person name="Kanehori K."/>
            <person name="Takahashi-Fujii A."/>
            <person name="Hara H."/>
            <person name="Tanase T.-O."/>
            <person name="Nomura Y."/>
            <person name="Togiya S."/>
            <person name="Komai F."/>
            <person name="Hara R."/>
            <person name="Takeuchi K."/>
            <person name="Arita M."/>
            <person name="Imose N."/>
            <person name="Musashino K."/>
            <person name="Yuuki H."/>
            <person name="Oshima A."/>
            <person name="Sasaki N."/>
            <person name="Aotsuka S."/>
            <person name="Yoshikawa Y."/>
            <person name="Matsunawa H."/>
            <person name="Ichihara T."/>
            <person name="Shiohata N."/>
            <person name="Sano S."/>
            <person name="Moriya S."/>
            <person name="Momiyama H."/>
            <person name="Satoh N."/>
            <person name="Takami S."/>
            <person name="Terashima Y."/>
            <person name="Suzuki O."/>
            <person name="Nakagawa S."/>
            <person name="Senoh A."/>
            <person name="Mizoguchi H."/>
            <person name="Goto Y."/>
            <person name="Shimizu F."/>
            <person name="Wakebe H."/>
            <person name="Hishigaki H."/>
            <person name="Watanabe T."/>
            <person name="Sugiyama A."/>
            <person name="Takemoto M."/>
            <person name="Kawakami B."/>
            <person name="Yamazaki M."/>
            <person name="Watanabe K."/>
            <person name="Kumagai A."/>
            <person name="Itakura S."/>
            <person name="Fukuzumi Y."/>
            <person name="Fujimori Y."/>
            <person name="Komiyama M."/>
            <person name="Tashiro H."/>
            <person name="Tanigami A."/>
            <person name="Fujiwara T."/>
            <person name="Ono T."/>
            <person name="Yamada K."/>
            <person name="Fujii Y."/>
            <person name="Ozaki K."/>
            <person name="Hirao M."/>
            <person name="Ohmori Y."/>
            <person name="Kawabata A."/>
            <person name="Hikiji T."/>
            <person name="Kobatake N."/>
            <person name="Inagaki H."/>
            <person name="Ikema Y."/>
            <person name="Okamoto S."/>
            <person name="Okitani R."/>
            <person name="Kawakami T."/>
            <person name="Noguchi S."/>
            <person name="Itoh T."/>
            <person name="Shigeta K."/>
            <person name="Senba T."/>
            <person name="Matsumura K."/>
            <person name="Nakajima Y."/>
            <person name="Mizuno T."/>
            <person name="Morinaga M."/>
            <person name="Sasaki M."/>
            <person name="Togashi T."/>
            <person name="Oyama M."/>
            <person name="Hata H."/>
            <person name="Watanabe M."/>
            <person name="Komatsu T."/>
            <person name="Mizushima-Sugano J."/>
            <person name="Satoh T."/>
            <person name="Shirai Y."/>
            <person name="Takahashi Y."/>
            <person name="Nakagawa K."/>
            <person name="Okumura K."/>
            <person name="Nagase T."/>
            <person name="Nomura N."/>
            <person name="Kikuchi H."/>
            <person name="Masuho Y."/>
            <person name="Yamashita R."/>
            <person name="Nakai K."/>
            <person name="Yada T."/>
            <person name="Nakamura Y."/>
            <person name="Ohara O."/>
            <person name="Isogai T."/>
            <person name="Sugano S."/>
        </authorList>
    </citation>
    <scope>NUCLEOTIDE SEQUENCE [LARGE SCALE MRNA] (ISOFORM 2)</scope>
    <source>
        <tissue>Thalamus</tissue>
    </source>
</reference>
<reference key="3">
    <citation type="journal article" date="2006" name="Nature">
        <title>DNA sequence of human chromosome 17 and analysis of rearrangement in the human lineage.</title>
        <authorList>
            <person name="Zody M.C."/>
            <person name="Garber M."/>
            <person name="Adams D.J."/>
            <person name="Sharpe T."/>
            <person name="Harrow J."/>
            <person name="Lupski J.R."/>
            <person name="Nicholson C."/>
            <person name="Searle S.M."/>
            <person name="Wilming L."/>
            <person name="Young S.K."/>
            <person name="Abouelleil A."/>
            <person name="Allen N.R."/>
            <person name="Bi W."/>
            <person name="Bloom T."/>
            <person name="Borowsky M.L."/>
            <person name="Bugalter B.E."/>
            <person name="Butler J."/>
            <person name="Chang J.L."/>
            <person name="Chen C.-K."/>
            <person name="Cook A."/>
            <person name="Corum B."/>
            <person name="Cuomo C.A."/>
            <person name="de Jong P.J."/>
            <person name="DeCaprio D."/>
            <person name="Dewar K."/>
            <person name="FitzGerald M."/>
            <person name="Gilbert J."/>
            <person name="Gibson R."/>
            <person name="Gnerre S."/>
            <person name="Goldstein S."/>
            <person name="Grafham D.V."/>
            <person name="Grocock R."/>
            <person name="Hafez N."/>
            <person name="Hagopian D.S."/>
            <person name="Hart E."/>
            <person name="Norman C.H."/>
            <person name="Humphray S."/>
            <person name="Jaffe D.B."/>
            <person name="Jones M."/>
            <person name="Kamal M."/>
            <person name="Khodiyar V.K."/>
            <person name="LaButti K."/>
            <person name="Laird G."/>
            <person name="Lehoczky J."/>
            <person name="Liu X."/>
            <person name="Lokyitsang T."/>
            <person name="Loveland J."/>
            <person name="Lui A."/>
            <person name="Macdonald P."/>
            <person name="Major J.E."/>
            <person name="Matthews L."/>
            <person name="Mauceli E."/>
            <person name="McCarroll S.A."/>
            <person name="Mihalev A.H."/>
            <person name="Mudge J."/>
            <person name="Nguyen C."/>
            <person name="Nicol R."/>
            <person name="O'Leary S.B."/>
            <person name="Osoegawa K."/>
            <person name="Schwartz D.C."/>
            <person name="Shaw-Smith C."/>
            <person name="Stankiewicz P."/>
            <person name="Steward C."/>
            <person name="Swarbreck D."/>
            <person name="Venkataraman V."/>
            <person name="Whittaker C.A."/>
            <person name="Yang X."/>
            <person name="Zimmer A.R."/>
            <person name="Bradley A."/>
            <person name="Hubbard T."/>
            <person name="Birren B.W."/>
            <person name="Rogers J."/>
            <person name="Lander E.S."/>
            <person name="Nusbaum C."/>
        </authorList>
    </citation>
    <scope>NUCLEOTIDE SEQUENCE [LARGE SCALE GENOMIC DNA]</scope>
</reference>
<reference key="4">
    <citation type="submission" date="2005-09" db="EMBL/GenBank/DDBJ databases">
        <authorList>
            <person name="Mural R.J."/>
            <person name="Istrail S."/>
            <person name="Sutton G.G."/>
            <person name="Florea L."/>
            <person name="Halpern A.L."/>
            <person name="Mobarry C.M."/>
            <person name="Lippert R."/>
            <person name="Walenz B."/>
            <person name="Shatkay H."/>
            <person name="Dew I."/>
            <person name="Miller J.R."/>
            <person name="Flanigan M.J."/>
            <person name="Edwards N.J."/>
            <person name="Bolanos R."/>
            <person name="Fasulo D."/>
            <person name="Halldorsson B.V."/>
            <person name="Hannenhalli S."/>
            <person name="Turner R."/>
            <person name="Yooseph S."/>
            <person name="Lu F."/>
            <person name="Nusskern D.R."/>
            <person name="Shue B.C."/>
            <person name="Zheng X.H."/>
            <person name="Zhong F."/>
            <person name="Delcher A.L."/>
            <person name="Huson D.H."/>
            <person name="Kravitz S.A."/>
            <person name="Mouchard L."/>
            <person name="Reinert K."/>
            <person name="Remington K.A."/>
            <person name="Clark A.G."/>
            <person name="Waterman M.S."/>
            <person name="Eichler E.E."/>
            <person name="Adams M.D."/>
            <person name="Hunkapiller M.W."/>
            <person name="Myers E.W."/>
            <person name="Venter J.C."/>
        </authorList>
    </citation>
    <scope>NUCLEOTIDE SEQUENCE [LARGE SCALE GENOMIC DNA]</scope>
</reference>
<reference key="5">
    <citation type="submission" date="2005-04" db="EMBL/GenBank/DDBJ databases">
        <authorList>
            <person name="Totoki Y."/>
            <person name="Toyoda A."/>
            <person name="Takeda T."/>
            <person name="Sakaki Y."/>
            <person name="Tanaka A."/>
            <person name="Yokoyama S."/>
        </authorList>
    </citation>
    <scope>NUCLEOTIDE SEQUENCE [LARGE SCALE MRNA] OF 267-620 (ISOFORM 1)</scope>
    <source>
        <tissue>Gastric mucosa</tissue>
    </source>
</reference>
<reference key="6">
    <citation type="journal article" date="2004" name="Genome Res.">
        <title>The status, quality, and expansion of the NIH full-length cDNA project: the Mammalian Gene Collection (MGC).</title>
        <authorList>
            <consortium name="The MGC Project Team"/>
        </authorList>
    </citation>
    <scope>NUCLEOTIDE SEQUENCE [LARGE SCALE MRNA] OF 287-620</scope>
    <source>
        <tissue>Colon</tissue>
    </source>
</reference>
<reference key="7">
    <citation type="journal article" date="2006" name="Cell">
        <title>Global, in vivo, and site-specific phosphorylation dynamics in signaling networks.</title>
        <authorList>
            <person name="Olsen J.V."/>
            <person name="Blagoev B."/>
            <person name="Gnad F."/>
            <person name="Macek B."/>
            <person name="Kumar C."/>
            <person name="Mortensen P."/>
            <person name="Mann M."/>
        </authorList>
    </citation>
    <scope>PHOSPHORYLATION [LARGE SCALE ANALYSIS] AT SER-620</scope>
    <scope>IDENTIFICATION BY MASS SPECTROMETRY [LARGE SCALE ANALYSIS]</scope>
    <source>
        <tissue>Cervix carcinoma</tissue>
    </source>
</reference>
<reference key="8">
    <citation type="journal article" date="2008" name="J. Proteome Res.">
        <title>Combining protein-based IMAC, peptide-based IMAC, and MudPIT for efficient phosphoproteomic analysis.</title>
        <authorList>
            <person name="Cantin G.T."/>
            <person name="Yi W."/>
            <person name="Lu B."/>
            <person name="Park S.K."/>
            <person name="Xu T."/>
            <person name="Lee J.-D."/>
            <person name="Yates J.R. III"/>
        </authorList>
    </citation>
    <scope>PHOSPHORYLATION [LARGE SCALE ANALYSIS] AT SER-25</scope>
    <scope>IDENTIFICATION BY MASS SPECTROMETRY [LARGE SCALE ANALYSIS]</scope>
    <source>
        <tissue>Cervix carcinoma</tissue>
    </source>
</reference>
<reference key="9">
    <citation type="journal article" date="2008" name="Proc. Natl. Acad. Sci. U.S.A.">
        <title>A quantitative atlas of mitotic phosphorylation.</title>
        <authorList>
            <person name="Dephoure N."/>
            <person name="Zhou C."/>
            <person name="Villen J."/>
            <person name="Beausoleil S.A."/>
            <person name="Bakalarski C.E."/>
            <person name="Elledge S.J."/>
            <person name="Gygi S.P."/>
        </authorList>
    </citation>
    <scope>PHOSPHORYLATION [LARGE SCALE ANALYSIS] AT SER-25; SER-209; SER-210; THR-413 AND SER-415</scope>
    <scope>IDENTIFICATION BY MASS SPECTROMETRY [LARGE SCALE ANALYSIS]</scope>
    <source>
        <tissue>Cervix carcinoma</tissue>
    </source>
</reference>
<reference key="10">
    <citation type="journal article" date="2010" name="Sci. Signal.">
        <title>Quantitative phosphoproteomics reveals widespread full phosphorylation site occupancy during mitosis.</title>
        <authorList>
            <person name="Olsen J.V."/>
            <person name="Vermeulen M."/>
            <person name="Santamaria A."/>
            <person name="Kumar C."/>
            <person name="Miller M.L."/>
            <person name="Jensen L.J."/>
            <person name="Gnad F."/>
            <person name="Cox J."/>
            <person name="Jensen T.S."/>
            <person name="Nigg E.A."/>
            <person name="Brunak S."/>
            <person name="Mann M."/>
        </authorList>
    </citation>
    <scope>PHOSPHORYLATION [LARGE SCALE ANALYSIS] AT SER-25; SER-209 AND SER-210</scope>
    <scope>IDENTIFICATION BY MASS SPECTROMETRY [LARGE SCALE ANALYSIS]</scope>
    <source>
        <tissue>Cervix carcinoma</tissue>
    </source>
</reference>
<reference key="11">
    <citation type="journal article" date="2011" name="Sci. Signal.">
        <title>System-wide temporal characterization of the proteome and phosphoproteome of human embryonic stem cell differentiation.</title>
        <authorList>
            <person name="Rigbolt K.T."/>
            <person name="Prokhorova T.A."/>
            <person name="Akimov V."/>
            <person name="Henningsen J."/>
            <person name="Johansen P.T."/>
            <person name="Kratchmarova I."/>
            <person name="Kassem M."/>
            <person name="Mann M."/>
            <person name="Olsen J.V."/>
            <person name="Blagoev B."/>
        </authorList>
    </citation>
    <scope>PHOSPHORYLATION [LARGE SCALE ANALYSIS] AT SER-25; SER-209 AND SER-210</scope>
    <scope>IDENTIFICATION BY MASS SPECTROMETRY [LARGE SCALE ANALYSIS]</scope>
</reference>
<reference key="12">
    <citation type="journal article" date="2013" name="J. Proteome Res.">
        <title>Toward a comprehensive characterization of a human cancer cell phosphoproteome.</title>
        <authorList>
            <person name="Zhou H."/>
            <person name="Di Palma S."/>
            <person name="Preisinger C."/>
            <person name="Peng M."/>
            <person name="Polat A.N."/>
            <person name="Heck A.J."/>
            <person name="Mohammed S."/>
        </authorList>
    </citation>
    <scope>PHOSPHORYLATION [LARGE SCALE ANALYSIS] AT SER-25; SER-73 AND SER-415</scope>
    <scope>IDENTIFICATION BY MASS SPECTROMETRY [LARGE SCALE ANALYSIS]</scope>
    <source>
        <tissue>Cervix carcinoma</tissue>
        <tissue>Erythroleukemia</tissue>
    </source>
</reference>
<reference key="13">
    <citation type="journal article" date="2014" name="J. Proteomics">
        <title>An enzyme assisted RP-RPLC approach for in-depth analysis of human liver phosphoproteome.</title>
        <authorList>
            <person name="Bian Y."/>
            <person name="Song C."/>
            <person name="Cheng K."/>
            <person name="Dong M."/>
            <person name="Wang F."/>
            <person name="Huang J."/>
            <person name="Sun D."/>
            <person name="Wang L."/>
            <person name="Ye M."/>
            <person name="Zou H."/>
        </authorList>
    </citation>
    <scope>PHOSPHORYLATION [LARGE SCALE ANALYSIS] AT SER-25</scope>
    <scope>IDENTIFICATION BY MASS SPECTROMETRY [LARGE SCALE ANALYSIS]</scope>
    <source>
        <tissue>Liver</tissue>
    </source>
</reference>
<reference key="14">
    <citation type="journal article" date="2014" name="Nat. Struct. Mol. Biol.">
        <title>Uncovering global SUMOylation signaling networks in a site-specific manner.</title>
        <authorList>
            <person name="Hendriks I.A."/>
            <person name="D'Souza R.C."/>
            <person name="Yang B."/>
            <person name="Verlaan-de Vries M."/>
            <person name="Mann M."/>
            <person name="Vertegaal A.C."/>
        </authorList>
    </citation>
    <scope>SUMOYLATION [LARGE SCALE ANALYSIS] AT LYS-12</scope>
    <scope>IDENTIFICATION BY MASS SPECTROMETRY [LARGE SCALE ANALYSIS]</scope>
</reference>
<reference key="15">
    <citation type="journal article" date="2015" name="Nat. Commun.">
        <title>mRNA export through an additional cap-binding complex consisting of NCBP1 and NCBP3.</title>
        <authorList>
            <person name="Gebhardt A."/>
            <person name="Habjan M."/>
            <person name="Benda C."/>
            <person name="Meiler A."/>
            <person name="Haas D.A."/>
            <person name="Hein M.Y."/>
            <person name="Mann A."/>
            <person name="Mann M."/>
            <person name="Habermann B."/>
            <person name="Pichlmair A."/>
        </authorList>
    </citation>
    <scope>FUNCTION</scope>
    <scope>SUBCELLULAR LOCATION</scope>
    <scope>INTERACTION WITH NCBP1; SRRT; KPNA3; THOC5 AND EIF4A3</scope>
    <scope>RNA-BINDING</scope>
    <scope>MUTAGENESIS OF ASP-134 AND 155-TRP--ASP-158</scope>
    <scope>WLDD MOTIF</scope>
    <scope>RRM REGION</scope>
    <scope>IDENTIFICATION BY MASS SPECTROMETRY</scope>
</reference>
<reference key="16">
    <citation type="journal article" date="2017" name="Nat. Struct. Mol. Biol.">
        <title>Site-specific mapping of the human SUMO proteome reveals co-modification with phosphorylation.</title>
        <authorList>
            <person name="Hendriks I.A."/>
            <person name="Lyon D."/>
            <person name="Young C."/>
            <person name="Jensen L.J."/>
            <person name="Vertegaal A.C."/>
            <person name="Nielsen M.L."/>
        </authorList>
    </citation>
    <scope>SUMOYLATION [LARGE SCALE ANALYSIS] AT LYS-12; LYS-70; LYS-186 AND LYS-541</scope>
    <scope>IDENTIFICATION BY MASS SPECTROMETRY [LARGE SCALE ANALYSIS]</scope>
</reference>
<keyword id="KW-0002">3D-structure</keyword>
<keyword id="KW-0025">Alternative splicing</keyword>
<keyword id="KW-0051">Antiviral defense</keyword>
<keyword id="KW-0963">Cytoplasm</keyword>
<keyword id="KW-1017">Isopeptide bond</keyword>
<keyword id="KW-0506">mRNA capping</keyword>
<keyword id="KW-0507">mRNA processing</keyword>
<keyword id="KW-0509">mRNA transport</keyword>
<keyword id="KW-0539">Nucleus</keyword>
<keyword id="KW-0597">Phosphoprotein</keyword>
<keyword id="KW-1267">Proteomics identification</keyword>
<keyword id="KW-1185">Reference proteome</keyword>
<keyword id="KW-0694">RNA-binding</keyword>
<keyword id="KW-0813">Transport</keyword>
<keyword id="KW-0832">Ubl conjugation</keyword>
<comment type="function">
    <text evidence="2">Associates with NCBP1/CBP80 to form an alternative cap-binding complex (CBC) which plays a key role in mRNA export. NCBP3 serves as adapter protein linking the capped RNAs (m7GpppG-capped RNA) to NCBP1/CBP80. Unlike the conventional CBC with NCBP2 which binds both small nuclear RNA (snRNA) and messenger (mRNA) and is involved in their export from the nucleus, the alternative CBC with NCBP3 does not bind snRNA and associates only with mRNA thereby playing a role in only mRNA export. The alternative CBC is particularly important in cellular stress situations such as virus infections and the NCBP3 activity is critical to inhibit virus growth (PubMed:26382858).</text>
</comment>
<comment type="subunit">
    <text evidence="2">Component of an alternative cap-binding complex (CBC) composed of NCBP1/CBP80 and NCBP3. Interacts with SRRT, KPNA3, THOC5 and EIF4A3.</text>
</comment>
<comment type="interaction">
    <interactant intactId="EBI-6657994">
        <id>Q53F19</id>
    </interactant>
    <interactant intactId="EBI-396343">
        <id>O00629</id>
        <label>KPNA4</label>
    </interactant>
    <organismsDiffer>false</organismsDiffer>
    <experiments>5</experiments>
</comment>
<comment type="interaction">
    <interactant intactId="EBI-6657994">
        <id>Q53F19</id>
    </interactant>
    <interactant intactId="EBI-739546">
        <id>Q96PV6</id>
        <label>LENG8</label>
    </interactant>
    <organismsDiffer>false</organismsDiffer>
    <experiments>7</experiments>
</comment>
<comment type="interaction">
    <interactant intactId="EBI-6657994">
        <id>Q53F19</id>
    </interactant>
    <interactant intactId="EBI-464743">
        <id>Q09161</id>
        <label>NCBP1</label>
    </interactant>
    <organismsDiffer>false</organismsDiffer>
    <experiments>11</experiments>
</comment>
<comment type="subcellular location">
    <subcellularLocation>
        <location evidence="2">Nucleus</location>
    </subcellularLocation>
    <subcellularLocation>
        <location evidence="2">Cytoplasm</location>
    </subcellularLocation>
</comment>
<comment type="alternative products">
    <event type="alternative splicing"/>
    <isoform>
        <id>Q53F19-1</id>
        <name>1</name>
        <sequence type="displayed"/>
    </isoform>
    <isoform>
        <id>Q53F19-2</id>
        <name>2</name>
        <sequence type="described" ref="VSP_028999"/>
    </isoform>
</comment>
<comment type="similarity">
    <text evidence="6">Belongs to the NCBP3 family.</text>
</comment>
<comment type="sequence caution" evidence="6">
    <conflict type="erroneous initiation">
        <sequence resource="EMBL-CDS" id="BAD97190"/>
    </conflict>
    <text>Truncated N-terminus.</text>
</comment>
<organism>
    <name type="scientific">Homo sapiens</name>
    <name type="common">Human</name>
    <dbReference type="NCBI Taxonomy" id="9606"/>
    <lineage>
        <taxon>Eukaryota</taxon>
        <taxon>Metazoa</taxon>
        <taxon>Chordata</taxon>
        <taxon>Craniata</taxon>
        <taxon>Vertebrata</taxon>
        <taxon>Euteleostomi</taxon>
        <taxon>Mammalia</taxon>
        <taxon>Eutheria</taxon>
        <taxon>Euarchontoglires</taxon>
        <taxon>Primates</taxon>
        <taxon>Haplorrhini</taxon>
        <taxon>Catarrhini</taxon>
        <taxon>Hominidae</taxon>
        <taxon>Homo</taxon>
    </lineage>
</organism>
<evidence type="ECO:0000256" key="1">
    <source>
        <dbReference type="SAM" id="MobiDB-lite"/>
    </source>
</evidence>
<evidence type="ECO:0000269" key="2">
    <source>
    </source>
</evidence>
<evidence type="ECO:0000303" key="3">
    <source>
    </source>
</evidence>
<evidence type="ECO:0000303" key="4">
    <source>
    </source>
</evidence>
<evidence type="ECO:0000303" key="5">
    <source ref="1"/>
</evidence>
<evidence type="ECO:0000305" key="6"/>
<evidence type="ECO:0000312" key="7">
    <source>
        <dbReference type="HGNC" id="HGNC:24612"/>
    </source>
</evidence>
<evidence type="ECO:0007744" key="8">
    <source>
    </source>
</evidence>
<evidence type="ECO:0007744" key="9">
    <source>
    </source>
</evidence>
<evidence type="ECO:0007744" key="10">
    <source>
    </source>
</evidence>
<evidence type="ECO:0007744" key="11">
    <source>
    </source>
</evidence>
<evidence type="ECO:0007744" key="12">
    <source>
    </source>
</evidence>
<evidence type="ECO:0007744" key="13">
    <source>
    </source>
</evidence>
<evidence type="ECO:0007744" key="14">
    <source>
    </source>
</evidence>
<evidence type="ECO:0007744" key="15">
    <source>
    </source>
</evidence>
<evidence type="ECO:0007744" key="16">
    <source>
    </source>
</evidence>
<evidence type="ECO:0007829" key="17">
    <source>
        <dbReference type="PDB" id="8BY6"/>
    </source>
</evidence>
<proteinExistence type="evidence at protein level"/>
<sequence length="620" mass="70593">MAAVRGLRVSVKAEAPAGPALGLPSPEAESGVDRGEPEPMEVEEGELEIVPVRRSLKELIPDTSRRYENKAGSFITGIDVTSKEAIEKKEQRAKRFHFRSEVNLAQRNVALDRDMMKKAIPKVRLETIYICGVDEMSTQDVFSYFKEYPPAHIEWLDDTSCNVVWLDEMTATRALINMSSLPAQDKIRSRDASEDKSAEKRKKDKQEDSSDDDEAEEGEVEDENSSDVELDTLSQVEEESLLRNDLRPANKLAKGNRLFMRFATKDDKKELGAARRSQYYMKYGNPNYGGMKGILSNSWKRRYHSRRIQRDVIKKRALIGDDVGLTSYKHRHSGLVNVPEEPIEEEEEEEEEEEEEEEEDQDMDADDRVVVEYHEELPALKQPRERSASRRSSASSSDSDEMDYDLELKMISTPSPKKSMKMTMYADEVESQLKNIRNSMRADSVSSSNIKNRIGNKLPPEKFADVRHLLDEKRQHSRPRPPVSSTKSDIRQRLGKRPHSPEKAFSSNPVVRREPSSDVHSRLGVPRQDSKGLYADTREKKSGNLWTRLGSAPKTKEKNTKKVDHRAPGAEEDDSELQRAWGALIKEKEQSRQKKSRLDNLPSLQIEVSRESSSGSEAES</sequence>